<name>BDH_LAVIN</name>
<sequence length="259" mass="27270">MASTVLRRLEGKVALITGAASGIGESAARLFSRHGAKVVIADIQDELALNICKDLGSTFVHCDVTKEFDVETAVNTAVSTYGKLDIMLNNAGISGAPKYKISNTQLSDFKRVVDVNLVGVFLGTKHAARVMIPNRSGSIISTASAATAAAAGTPYPYICSKHGVVGLTRNAAVEMGGHGIRVNCVSPYYVATPMTRDDDWIQGCFSNLKGAVLTAEDVAEAALYLASDESKYVSGHNLLVDGGVSIMNQGCNMFDLMDS</sequence>
<gene>
    <name evidence="8" type="primary">BDH</name>
</gene>
<dbReference type="EC" id="1.1.1.-" evidence="7"/>
<dbReference type="EMBL" id="JX972167">
    <property type="protein sequence ID" value="AFV30207.1"/>
    <property type="molecule type" value="mRNA"/>
</dbReference>
<dbReference type="SMR" id="K4N0V2"/>
<dbReference type="BRENDA" id="1.1.1.198">
    <property type="organism ID" value="12981"/>
</dbReference>
<dbReference type="UniPathway" id="UPA00213"/>
<dbReference type="GO" id="GO:0005739">
    <property type="term" value="C:mitochondrion"/>
    <property type="evidence" value="ECO:0007669"/>
    <property type="project" value="UniProtKB-SubCell"/>
</dbReference>
<dbReference type="GO" id="GO:0016491">
    <property type="term" value="F:oxidoreductase activity"/>
    <property type="evidence" value="ECO:0007669"/>
    <property type="project" value="UniProtKB-KW"/>
</dbReference>
<dbReference type="GO" id="GO:0016114">
    <property type="term" value="P:terpenoid biosynthetic process"/>
    <property type="evidence" value="ECO:0007669"/>
    <property type="project" value="UniProtKB-UniPathway"/>
</dbReference>
<dbReference type="FunFam" id="3.40.50.720:FF:000084">
    <property type="entry name" value="Short-chain dehydrogenase reductase"/>
    <property type="match status" value="1"/>
</dbReference>
<dbReference type="Gene3D" id="3.40.50.720">
    <property type="entry name" value="NAD(P)-binding Rossmann-like Domain"/>
    <property type="match status" value="1"/>
</dbReference>
<dbReference type="InterPro" id="IPR036291">
    <property type="entry name" value="NAD(P)-bd_dom_sf"/>
</dbReference>
<dbReference type="InterPro" id="IPR002347">
    <property type="entry name" value="SDR_fam"/>
</dbReference>
<dbReference type="PANTHER" id="PTHR43180">
    <property type="entry name" value="3-OXOACYL-(ACYL-CARRIER-PROTEIN) REDUCTASE (AFU_ORTHOLOGUE AFUA_6G11210)"/>
    <property type="match status" value="1"/>
</dbReference>
<dbReference type="PANTHER" id="PTHR43180:SF30">
    <property type="entry name" value="MOMILACTONE A SYNTHASE"/>
    <property type="match status" value="1"/>
</dbReference>
<dbReference type="Pfam" id="PF13561">
    <property type="entry name" value="adh_short_C2"/>
    <property type="match status" value="1"/>
</dbReference>
<dbReference type="PRINTS" id="PR00081">
    <property type="entry name" value="GDHRDH"/>
</dbReference>
<dbReference type="PRINTS" id="PR00080">
    <property type="entry name" value="SDRFAMILY"/>
</dbReference>
<dbReference type="SUPFAM" id="SSF51735">
    <property type="entry name" value="NAD(P)-binding Rossmann-fold domains"/>
    <property type="match status" value="1"/>
</dbReference>
<feature type="transit peptide" description="Mitochondrion" evidence="5">
    <location>
        <begin position="1"/>
        <end position="30"/>
    </location>
</feature>
<feature type="chain" id="PRO_0000455264" description="Borneol dehydrogenase, mitochondrial">
    <location>
        <begin position="31"/>
        <end position="259"/>
    </location>
</feature>
<feature type="active site" description="Proton donor" evidence="2">
    <location>
        <position position="144"/>
    </location>
</feature>
<feature type="active site" description="Proton acceptor" evidence="6">
    <location>
        <position position="157"/>
    </location>
</feature>
<feature type="active site" description="Proton donor/acceptor" evidence="3">
    <location>
        <position position="161"/>
    </location>
</feature>
<feature type="binding site" evidence="1">
    <location>
        <begin position="21"/>
        <end position="23"/>
    </location>
    <ligand>
        <name>NAD(+)</name>
        <dbReference type="ChEBI" id="CHEBI:57540"/>
    </ligand>
</feature>
<feature type="binding site" evidence="1">
    <location>
        <position position="42"/>
    </location>
    <ligand>
        <name>NAD(+)</name>
        <dbReference type="ChEBI" id="CHEBI:57540"/>
    </ligand>
</feature>
<feature type="binding site" evidence="1">
    <location>
        <begin position="63"/>
        <end position="64"/>
    </location>
    <ligand>
        <name>NAD(+)</name>
        <dbReference type="ChEBI" id="CHEBI:57540"/>
    </ligand>
</feature>
<feature type="binding site" evidence="1">
    <location>
        <begin position="90"/>
        <end position="92"/>
    </location>
    <ligand>
        <name>NAD(+)</name>
        <dbReference type="ChEBI" id="CHEBI:57540"/>
    </ligand>
</feature>
<feature type="binding site" evidence="4">
    <location>
        <position position="144"/>
    </location>
    <ligand>
        <name>substrate</name>
    </ligand>
</feature>
<feature type="binding site" evidence="1">
    <location>
        <position position="157"/>
    </location>
    <ligand>
        <name>NAD(+)</name>
        <dbReference type="ChEBI" id="CHEBI:57540"/>
    </ligand>
</feature>
<feature type="binding site" evidence="4">
    <location>
        <position position="157"/>
    </location>
    <ligand>
        <name>substrate</name>
    </ligand>
</feature>
<feature type="binding site" evidence="1">
    <location>
        <position position="161"/>
    </location>
    <ligand>
        <name>NAD(+)</name>
        <dbReference type="ChEBI" id="CHEBI:57540"/>
    </ligand>
</feature>
<feature type="binding site" evidence="1">
    <location>
        <position position="192"/>
    </location>
    <ligand>
        <name>NAD(+)</name>
        <dbReference type="ChEBI" id="CHEBI:57540"/>
    </ligand>
</feature>
<keyword id="KW-0496">Mitochondrion</keyword>
<keyword id="KW-0520">NAD</keyword>
<keyword id="KW-0560">Oxidoreductase</keyword>
<keyword id="KW-0809">Transit peptide</keyword>
<proteinExistence type="evidence at protein level"/>
<protein>
    <recommendedName>
        <fullName evidence="8">Borneol dehydrogenase, mitochondrial</fullName>
        <shortName evidence="8">LiBDH</shortName>
        <ecNumber evidence="7">1.1.1.-</ecNumber>
    </recommendedName>
</protein>
<evidence type="ECO:0000250" key="1">
    <source>
        <dbReference type="UniProtKB" id="I6Y778"/>
    </source>
</evidence>
<evidence type="ECO:0000250" key="2">
    <source>
        <dbReference type="UniProtKB" id="O93868"/>
    </source>
</evidence>
<evidence type="ECO:0000250" key="3">
    <source>
        <dbReference type="UniProtKB" id="P19337"/>
    </source>
</evidence>
<evidence type="ECO:0000250" key="4">
    <source>
        <dbReference type="UniProtKB" id="Q8KES3"/>
    </source>
</evidence>
<evidence type="ECO:0000255" key="5"/>
<evidence type="ECO:0000255" key="6">
    <source>
        <dbReference type="PROSITE-ProRule" id="PRU10001"/>
    </source>
</evidence>
<evidence type="ECO:0000269" key="7">
    <source>
    </source>
</evidence>
<evidence type="ECO:0000303" key="8">
    <source>
    </source>
</evidence>
<evidence type="ECO:0000305" key="9"/>
<accession>K4N0V2</accession>
<comment type="function">
    <text evidence="7">Involved in the biosynthesis of monoterpenes natural products related to camphor (PubMed:23058847). Catalyzes the conversion of borneol into camphor (PubMed:23058847).</text>
</comment>
<comment type="catalytic activity">
    <reaction evidence="7">
        <text>borneol + NAD(+) = camphor + NADH + H(+)</text>
        <dbReference type="Rhea" id="RHEA:68828"/>
        <dbReference type="ChEBI" id="CHEBI:15378"/>
        <dbReference type="ChEBI" id="CHEBI:28093"/>
        <dbReference type="ChEBI" id="CHEBI:36773"/>
        <dbReference type="ChEBI" id="CHEBI:57540"/>
        <dbReference type="ChEBI" id="CHEBI:57945"/>
    </reaction>
    <physiologicalReaction direction="left-to-right" evidence="7">
        <dbReference type="Rhea" id="RHEA:68829"/>
    </physiologicalReaction>
</comment>
<comment type="biophysicochemical properties">
    <kinetics>
        <KM evidence="7">53.6 uM for borneol</KM>
        <text evidence="7">kcat is 4x10(-4) sec(-1) with borneol as substrate.</text>
    </kinetics>
    <phDependence>
        <text evidence="7">Optimum pH is 8-8.5.</text>
    </phDependence>
    <temperatureDependence>
        <text evidence="7">Optimum temperature is 32 degrees Celsius.</text>
    </temperatureDependence>
</comment>
<comment type="pathway">
    <text evidence="7">Secondary metabolite biosynthesis; terpenoid biosynthesis.</text>
</comment>
<comment type="subcellular location">
    <subcellularLocation>
        <location evidence="5">Mitochondrion</location>
    </subcellularLocation>
</comment>
<comment type="tissue specificity">
    <text evidence="7">Specifically expressed in glandular trichomes of mature flowers.</text>
</comment>
<comment type="similarity">
    <text evidence="9">Belongs to the short-chain dehydrogenases/reductases (SDR) family.</text>
</comment>
<reference key="1">
    <citation type="journal article" date="2012" name="Arch. Biochem. Biophys.">
        <title>Molecular cloning and functional characterization of borneol dehydrogenase from the glandular trichomes of Lavandula x intermedia.</title>
        <authorList>
            <person name="Sarker L.S."/>
            <person name="Galata M."/>
            <person name="Demissie Z.A."/>
            <person name="Mahmoud S.S."/>
        </authorList>
    </citation>
    <scope>NUCLEOTIDE SEQUENCE [MRNA]</scope>
    <scope>FUNCTION</scope>
    <scope>CATALYTIC ACTIVITY</scope>
    <scope>PATHWAY</scope>
    <scope>BIOPHYSICOCHEMICAL PROPERTIES</scope>
    <scope>TISSUE SPECIFICITY</scope>
    <source>
        <tissue>Trichome gland</tissue>
    </source>
</reference>
<organism>
    <name type="scientific">Lavandula x intermedia</name>
    <name type="common">Lavandin</name>
    <name type="synonym">Lavandula angustifolia x Lavandula latifolia</name>
    <dbReference type="NCBI Taxonomy" id="1196215"/>
    <lineage>
        <taxon>Eukaryota</taxon>
        <taxon>Viridiplantae</taxon>
        <taxon>Streptophyta</taxon>
        <taxon>Embryophyta</taxon>
        <taxon>Tracheophyta</taxon>
        <taxon>Spermatophyta</taxon>
        <taxon>Magnoliopsida</taxon>
        <taxon>eudicotyledons</taxon>
        <taxon>Gunneridae</taxon>
        <taxon>Pentapetalae</taxon>
        <taxon>asterids</taxon>
        <taxon>lamiids</taxon>
        <taxon>Lamiales</taxon>
        <taxon>Lamiaceae</taxon>
        <taxon>Nepetoideae</taxon>
        <taxon>Ocimeae</taxon>
        <taxon>Lavandulinae</taxon>
        <taxon>Lavandula</taxon>
    </lineage>
</organism>